<gene>
    <name evidence="1" type="primary">glmM</name>
    <name type="ordered locus">Hac_1529</name>
</gene>
<dbReference type="EC" id="5.4.2.10" evidence="1"/>
<dbReference type="EMBL" id="AM260522">
    <property type="protein sequence ID" value="CAK00247.1"/>
    <property type="molecule type" value="Genomic_DNA"/>
</dbReference>
<dbReference type="RefSeq" id="WP_011578333.1">
    <property type="nucleotide sequence ID" value="NC_008229.1"/>
</dbReference>
<dbReference type="SMR" id="Q17VS9"/>
<dbReference type="STRING" id="382638.Hac_1529"/>
<dbReference type="GeneID" id="31758797"/>
<dbReference type="KEGG" id="hac:Hac_1529"/>
<dbReference type="eggNOG" id="COG1109">
    <property type="taxonomic scope" value="Bacteria"/>
</dbReference>
<dbReference type="HOGENOM" id="CLU_016950_7_0_7"/>
<dbReference type="OrthoDB" id="9806956at2"/>
<dbReference type="BioCyc" id="HACI382638:HAC_RS06480-MONOMER"/>
<dbReference type="Proteomes" id="UP000000775">
    <property type="component" value="Chromosome"/>
</dbReference>
<dbReference type="GO" id="GO:0005829">
    <property type="term" value="C:cytosol"/>
    <property type="evidence" value="ECO:0007669"/>
    <property type="project" value="TreeGrafter"/>
</dbReference>
<dbReference type="GO" id="GO:0000287">
    <property type="term" value="F:magnesium ion binding"/>
    <property type="evidence" value="ECO:0007669"/>
    <property type="project" value="UniProtKB-UniRule"/>
</dbReference>
<dbReference type="GO" id="GO:0008966">
    <property type="term" value="F:phosphoglucosamine mutase activity"/>
    <property type="evidence" value="ECO:0007669"/>
    <property type="project" value="UniProtKB-UniRule"/>
</dbReference>
<dbReference type="GO" id="GO:0004615">
    <property type="term" value="F:phosphomannomutase activity"/>
    <property type="evidence" value="ECO:0007669"/>
    <property type="project" value="TreeGrafter"/>
</dbReference>
<dbReference type="GO" id="GO:0005975">
    <property type="term" value="P:carbohydrate metabolic process"/>
    <property type="evidence" value="ECO:0007669"/>
    <property type="project" value="InterPro"/>
</dbReference>
<dbReference type="GO" id="GO:0009252">
    <property type="term" value="P:peptidoglycan biosynthetic process"/>
    <property type="evidence" value="ECO:0007669"/>
    <property type="project" value="TreeGrafter"/>
</dbReference>
<dbReference type="GO" id="GO:0006048">
    <property type="term" value="P:UDP-N-acetylglucosamine biosynthetic process"/>
    <property type="evidence" value="ECO:0007669"/>
    <property type="project" value="TreeGrafter"/>
</dbReference>
<dbReference type="CDD" id="cd05802">
    <property type="entry name" value="GlmM"/>
    <property type="match status" value="1"/>
</dbReference>
<dbReference type="FunFam" id="3.40.120.10:FF:000001">
    <property type="entry name" value="Phosphoglucosamine mutase"/>
    <property type="match status" value="1"/>
</dbReference>
<dbReference type="FunFam" id="3.40.120.10:FF:000003">
    <property type="entry name" value="Phosphoglucosamine mutase"/>
    <property type="match status" value="1"/>
</dbReference>
<dbReference type="Gene3D" id="3.40.120.10">
    <property type="entry name" value="Alpha-D-Glucose-1,6-Bisphosphate, subunit A, domain 3"/>
    <property type="match status" value="3"/>
</dbReference>
<dbReference type="Gene3D" id="3.30.310.50">
    <property type="entry name" value="Alpha-D-phosphohexomutase, C-terminal domain"/>
    <property type="match status" value="1"/>
</dbReference>
<dbReference type="HAMAP" id="MF_01554_B">
    <property type="entry name" value="GlmM_B"/>
    <property type="match status" value="1"/>
</dbReference>
<dbReference type="InterPro" id="IPR005844">
    <property type="entry name" value="A-D-PHexomutase_a/b/a-I"/>
</dbReference>
<dbReference type="InterPro" id="IPR016055">
    <property type="entry name" value="A-D-PHexomutase_a/b/a-I/II/III"/>
</dbReference>
<dbReference type="InterPro" id="IPR005845">
    <property type="entry name" value="A-D-PHexomutase_a/b/a-II"/>
</dbReference>
<dbReference type="InterPro" id="IPR005846">
    <property type="entry name" value="A-D-PHexomutase_a/b/a-III"/>
</dbReference>
<dbReference type="InterPro" id="IPR005843">
    <property type="entry name" value="A-D-PHexomutase_C"/>
</dbReference>
<dbReference type="InterPro" id="IPR036900">
    <property type="entry name" value="A-D-PHexomutase_C_sf"/>
</dbReference>
<dbReference type="InterPro" id="IPR016066">
    <property type="entry name" value="A-D-PHexomutase_CS"/>
</dbReference>
<dbReference type="InterPro" id="IPR005841">
    <property type="entry name" value="Alpha-D-phosphohexomutase_SF"/>
</dbReference>
<dbReference type="InterPro" id="IPR006352">
    <property type="entry name" value="GlmM_bact"/>
</dbReference>
<dbReference type="InterPro" id="IPR050060">
    <property type="entry name" value="Phosphoglucosamine_mutase"/>
</dbReference>
<dbReference type="NCBIfam" id="TIGR01455">
    <property type="entry name" value="glmM"/>
    <property type="match status" value="1"/>
</dbReference>
<dbReference type="PANTHER" id="PTHR42946:SF1">
    <property type="entry name" value="PHOSPHOGLUCOMUTASE (ALPHA-D-GLUCOSE-1,6-BISPHOSPHATE-DEPENDENT)"/>
    <property type="match status" value="1"/>
</dbReference>
<dbReference type="PANTHER" id="PTHR42946">
    <property type="entry name" value="PHOSPHOHEXOSE MUTASE"/>
    <property type="match status" value="1"/>
</dbReference>
<dbReference type="Pfam" id="PF02878">
    <property type="entry name" value="PGM_PMM_I"/>
    <property type="match status" value="1"/>
</dbReference>
<dbReference type="Pfam" id="PF02879">
    <property type="entry name" value="PGM_PMM_II"/>
    <property type="match status" value="1"/>
</dbReference>
<dbReference type="Pfam" id="PF02880">
    <property type="entry name" value="PGM_PMM_III"/>
    <property type="match status" value="1"/>
</dbReference>
<dbReference type="Pfam" id="PF00408">
    <property type="entry name" value="PGM_PMM_IV"/>
    <property type="match status" value="1"/>
</dbReference>
<dbReference type="PRINTS" id="PR00509">
    <property type="entry name" value="PGMPMM"/>
</dbReference>
<dbReference type="SUPFAM" id="SSF55957">
    <property type="entry name" value="Phosphoglucomutase, C-terminal domain"/>
    <property type="match status" value="1"/>
</dbReference>
<dbReference type="SUPFAM" id="SSF53738">
    <property type="entry name" value="Phosphoglucomutase, first 3 domains"/>
    <property type="match status" value="3"/>
</dbReference>
<dbReference type="PROSITE" id="PS00710">
    <property type="entry name" value="PGM_PMM"/>
    <property type="match status" value="1"/>
</dbReference>
<protein>
    <recommendedName>
        <fullName evidence="1">Phosphoglucosamine mutase</fullName>
        <ecNumber evidence="1">5.4.2.10</ecNumber>
    </recommendedName>
</protein>
<comment type="function">
    <text evidence="1">Catalyzes the conversion of glucosamine-6-phosphate to glucosamine-1-phosphate.</text>
</comment>
<comment type="catalytic activity">
    <reaction evidence="1">
        <text>alpha-D-glucosamine 1-phosphate = D-glucosamine 6-phosphate</text>
        <dbReference type="Rhea" id="RHEA:23424"/>
        <dbReference type="ChEBI" id="CHEBI:58516"/>
        <dbReference type="ChEBI" id="CHEBI:58725"/>
        <dbReference type="EC" id="5.4.2.10"/>
    </reaction>
</comment>
<comment type="cofactor">
    <cofactor evidence="1">
        <name>Mg(2+)</name>
        <dbReference type="ChEBI" id="CHEBI:18420"/>
    </cofactor>
    <text evidence="1">Binds 1 Mg(2+) ion per subunit.</text>
</comment>
<comment type="PTM">
    <text evidence="1">Activated by phosphorylation.</text>
</comment>
<comment type="similarity">
    <text evidence="1">Belongs to the phosphohexose mutase family.</text>
</comment>
<organism>
    <name type="scientific">Helicobacter acinonychis (strain Sheeba)</name>
    <dbReference type="NCBI Taxonomy" id="382638"/>
    <lineage>
        <taxon>Bacteria</taxon>
        <taxon>Pseudomonadati</taxon>
        <taxon>Campylobacterota</taxon>
        <taxon>Epsilonproteobacteria</taxon>
        <taxon>Campylobacterales</taxon>
        <taxon>Helicobacteraceae</taxon>
        <taxon>Helicobacter</taxon>
    </lineage>
</organism>
<proteinExistence type="inferred from homology"/>
<feature type="chain" id="PRO_0000301324" description="Phosphoglucosamine mutase">
    <location>
        <begin position="1"/>
        <end position="445"/>
    </location>
</feature>
<feature type="active site" description="Phosphoserine intermediate" evidence="1">
    <location>
        <position position="99"/>
    </location>
</feature>
<feature type="binding site" description="via phosphate group" evidence="1">
    <location>
        <position position="99"/>
    </location>
    <ligand>
        <name>Mg(2+)</name>
        <dbReference type="ChEBI" id="CHEBI:18420"/>
    </ligand>
</feature>
<feature type="binding site" evidence="1">
    <location>
        <position position="242"/>
    </location>
    <ligand>
        <name>Mg(2+)</name>
        <dbReference type="ChEBI" id="CHEBI:18420"/>
    </ligand>
</feature>
<feature type="binding site" evidence="1">
    <location>
        <position position="244"/>
    </location>
    <ligand>
        <name>Mg(2+)</name>
        <dbReference type="ChEBI" id="CHEBI:18420"/>
    </ligand>
</feature>
<feature type="binding site" evidence="1">
    <location>
        <position position="246"/>
    </location>
    <ligand>
        <name>Mg(2+)</name>
        <dbReference type="ChEBI" id="CHEBI:18420"/>
    </ligand>
</feature>
<feature type="modified residue" description="Phosphoserine" evidence="1">
    <location>
        <position position="99"/>
    </location>
</feature>
<sequence length="445" mass="49270">MKIFGTDGVRGRAGVKLTPMFVMRLGIAAGLYFKKHSKTDKILIGKDTRKSGYMVENALVSALTSIGYNVIQIGPMPTPAIAFLTEDMRCDAGIMISASHNPFEDNGIKFFNSYGYKLKEEEERAIEEIFHNEELLHSSYKVGESVGNAKRIDDVIGRYIVHLKHSFPKHLNLQSLRIVLDTANGAAYKVAPVVFSELGADVLVINDEPNGCNINEQCGALHPNQLSQEVKKYRADLGFAFDGDADRLVVVDNLGNIVHGDKLLGVLGVYQKSKNALSSQAIVATNMSNLALKEYLKSQDLELKHCTIGDKFVSECMQLNKANFGGEQSGHIIFSDYAKTGDGLVCALQVSALVLESKLASSVALNPFELYPQSLVNLDIQKKLPLESLKGYSALLKELDKLEIRHLIRYSGTENKLRILLEAKDEKLLELKMQELKEFFEGHLC</sequence>
<reference key="1">
    <citation type="journal article" date="2006" name="PLoS Genet.">
        <title>Who ate whom? Adaptive Helicobacter genomic changes that accompanied a host jump from early humans to large felines.</title>
        <authorList>
            <person name="Eppinger M."/>
            <person name="Baar C."/>
            <person name="Linz B."/>
            <person name="Raddatz G."/>
            <person name="Lanz C."/>
            <person name="Keller H."/>
            <person name="Morelli G."/>
            <person name="Gressmann H."/>
            <person name="Achtman M."/>
            <person name="Schuster S.C."/>
        </authorList>
    </citation>
    <scope>NUCLEOTIDE SEQUENCE [LARGE SCALE GENOMIC DNA]</scope>
    <source>
        <strain>Sheeba</strain>
    </source>
</reference>
<name>GLMM_HELAH</name>
<keyword id="KW-0413">Isomerase</keyword>
<keyword id="KW-0460">Magnesium</keyword>
<keyword id="KW-0479">Metal-binding</keyword>
<keyword id="KW-0597">Phosphoprotein</keyword>
<evidence type="ECO:0000255" key="1">
    <source>
        <dbReference type="HAMAP-Rule" id="MF_01554"/>
    </source>
</evidence>
<accession>Q17VS9</accession>